<reference key="1">
    <citation type="submission" date="2005-06" db="EMBL/GenBank/DDBJ databases">
        <authorList>
            <consortium name="NIH - Zebrafish Gene Collection (ZGC) project"/>
        </authorList>
    </citation>
    <scope>NUCLEOTIDE SEQUENCE [LARGE SCALE MRNA]</scope>
    <source>
        <tissue>Olfactory epithelium</tissue>
    </source>
</reference>
<accession>Q4QRJ7</accession>
<evidence type="ECO:0000250" key="1">
    <source>
        <dbReference type="UniProtKB" id="Q9BY44"/>
    </source>
</evidence>
<evidence type="ECO:0000255" key="2"/>
<evidence type="ECO:0000256" key="3">
    <source>
        <dbReference type="SAM" id="MobiDB-lite"/>
    </source>
</evidence>
<evidence type="ECO:0000305" key="4"/>
<sequence length="580" mass="64225">MAPPTPHLAVRGSDGTLLLHGPPNCQESSAFQRDDRQGRYMTFSNDGTLFAWCNGSQVTVLKVPSGDLVKSFDLPKTTALEFSPLNKVLATWQQYTKTQDNPQGEANLQLWDLQTGACMKAFYQKKMTGWCPSWADDESISVRNVNNELHFFENNNFETIANKLHLQKVSEFALSPGSQPSKVAVYVPGSKGAPSFVRLYQYPNFGGPTCALANKSFFKADKVNMLWNKKATAVLVTASTEVDKTGASYYGEQTLHYVATNGESAVVQLPKNGPIYDVSWSPNSTEFCVVYGFMPAKATVFNNKCESVFDFGTGPRNAAFYSPQGHILVLAGFGNLRGQMEVWDVKKYKQVSKPQAEDTTHFSWCPDGEHIVTATCSPRLRASNGYKIWHYTGTVLYKHETPSGKELWEVLWQPFPAGVFPERAVKYQALPSELGSTEAKPAQAYRPPALRNKPQTASSKLHEEEPPQNMKPGAAGEKQPSKAALKNQKRREAKKAAKQENKPDEAPPPAADPAPVSHVTSSCGDPETDKKIKNLKKKLKAIDELKEQQAAGKVMQKNQLEKMQKEAQLLKELEDLELGL</sequence>
<name>EIF2A_DANRE</name>
<dbReference type="EMBL" id="BC096815">
    <property type="protein sequence ID" value="AAH96815.1"/>
    <property type="molecule type" value="mRNA"/>
</dbReference>
<dbReference type="RefSeq" id="NP_001020341.1">
    <property type="nucleotide sequence ID" value="NM_001025170.2"/>
</dbReference>
<dbReference type="SMR" id="Q4QRJ7"/>
<dbReference type="FunCoup" id="Q4QRJ7">
    <property type="interactions" value="2613"/>
</dbReference>
<dbReference type="STRING" id="7955.ENSDARP00000132954"/>
<dbReference type="PaxDb" id="7955-ENSDARP00000068657"/>
<dbReference type="DNASU" id="573991"/>
<dbReference type="GeneID" id="573991"/>
<dbReference type="KEGG" id="dre:573991"/>
<dbReference type="AGR" id="ZFIN:ZDB-GENE-050626-52"/>
<dbReference type="CTD" id="83939"/>
<dbReference type="ZFIN" id="ZDB-GENE-050626-52">
    <property type="gene designation" value="eif2a"/>
</dbReference>
<dbReference type="eggNOG" id="KOG2315">
    <property type="taxonomic scope" value="Eukaryota"/>
</dbReference>
<dbReference type="InParanoid" id="Q4QRJ7"/>
<dbReference type="OrthoDB" id="2194683at2759"/>
<dbReference type="PhylomeDB" id="Q4QRJ7"/>
<dbReference type="PRO" id="PR:Q4QRJ7"/>
<dbReference type="Proteomes" id="UP000000437">
    <property type="component" value="Chromosome 18"/>
</dbReference>
<dbReference type="GO" id="GO:0022627">
    <property type="term" value="C:cytosolic small ribosomal subunit"/>
    <property type="evidence" value="ECO:0000318"/>
    <property type="project" value="GO_Central"/>
</dbReference>
<dbReference type="GO" id="GO:0003729">
    <property type="term" value="F:mRNA binding"/>
    <property type="evidence" value="ECO:0000318"/>
    <property type="project" value="GO_Central"/>
</dbReference>
<dbReference type="GO" id="GO:0043022">
    <property type="term" value="F:ribosome binding"/>
    <property type="evidence" value="ECO:0000318"/>
    <property type="project" value="GO_Central"/>
</dbReference>
<dbReference type="GO" id="GO:0003743">
    <property type="term" value="F:translation initiation factor activity"/>
    <property type="evidence" value="ECO:0000318"/>
    <property type="project" value="GO_Central"/>
</dbReference>
<dbReference type="GO" id="GO:0000049">
    <property type="term" value="F:tRNA binding"/>
    <property type="evidence" value="ECO:0000318"/>
    <property type="project" value="GO_Central"/>
</dbReference>
<dbReference type="GO" id="GO:0006417">
    <property type="term" value="P:regulation of translation"/>
    <property type="evidence" value="ECO:0007669"/>
    <property type="project" value="UniProtKB-KW"/>
</dbReference>
<dbReference type="FunFam" id="2.130.10.10:FF:000149">
    <property type="entry name" value="Eukaryotic translation initiation factor 2A"/>
    <property type="match status" value="1"/>
</dbReference>
<dbReference type="FunFam" id="2.130.10.10:FF:000976">
    <property type="entry name" value="Eukaryotic translation initiation factor 2A"/>
    <property type="match status" value="1"/>
</dbReference>
<dbReference type="Gene3D" id="2.130.10.10">
    <property type="entry name" value="YVTN repeat-like/Quinoprotein amine dehydrogenase"/>
    <property type="match status" value="2"/>
</dbReference>
<dbReference type="InterPro" id="IPR011387">
    <property type="entry name" value="TIF2A"/>
</dbReference>
<dbReference type="InterPro" id="IPR013979">
    <property type="entry name" value="TIF_beta_prop-like"/>
</dbReference>
<dbReference type="InterPro" id="IPR015943">
    <property type="entry name" value="WD40/YVTN_repeat-like_dom_sf"/>
</dbReference>
<dbReference type="PANTHER" id="PTHR13227">
    <property type="entry name" value="EUKARYOTIC TRANSLATION INITIATION FACTOR 2A"/>
    <property type="match status" value="1"/>
</dbReference>
<dbReference type="PANTHER" id="PTHR13227:SF0">
    <property type="entry name" value="EUKARYOTIC TRANSLATION INITIATION FACTOR 2A"/>
    <property type="match status" value="1"/>
</dbReference>
<dbReference type="Pfam" id="PF08662">
    <property type="entry name" value="eIF2A"/>
    <property type="match status" value="1"/>
</dbReference>
<dbReference type="PIRSF" id="PIRSF017222">
    <property type="entry name" value="eIF2A"/>
    <property type="match status" value="1"/>
</dbReference>
<dbReference type="SUPFAM" id="SSF82171">
    <property type="entry name" value="DPP6 N-terminal domain-like"/>
    <property type="match status" value="1"/>
</dbReference>
<comment type="function">
    <text evidence="1">Functions in the early steps of protein synthesis of a small number of specific mRNAs. Acts by directing the binding of methionyl-tRNAi to 40S ribosomal subunits. In contrast to the eIF-2 complex, it binds methionyl-tRNAi to 40S subunits in a codon-dependent manner, whereas the eIF-2 complex binds methionyl-tRNAi to 40S subunits in a GTP-dependent manner.</text>
</comment>
<comment type="similarity">
    <text evidence="4">Belongs to the WD repeat EIF2A family.</text>
</comment>
<protein>
    <recommendedName>
        <fullName>Eukaryotic translation initiation factor 2A</fullName>
        <shortName>eIF-2A</shortName>
    </recommendedName>
</protein>
<proteinExistence type="evidence at transcript level"/>
<feature type="chain" id="PRO_0000286079" description="Eukaryotic translation initiation factor 2A">
    <location>
        <begin position="1"/>
        <end position="580"/>
    </location>
</feature>
<feature type="repeat" description="WD 1">
    <location>
        <begin position="21"/>
        <end position="62"/>
    </location>
</feature>
<feature type="repeat" description="WD 2">
    <location>
        <begin position="72"/>
        <end position="121"/>
    </location>
</feature>
<feature type="repeat" description="WD 3">
    <location>
        <begin position="270"/>
        <end position="311"/>
    </location>
</feature>
<feature type="repeat" description="WD 4">
    <location>
        <begin position="355"/>
        <end position="399"/>
    </location>
</feature>
<feature type="region of interest" description="Disordered" evidence="3">
    <location>
        <begin position="435"/>
        <end position="530"/>
    </location>
</feature>
<feature type="coiled-coil region" evidence="2">
    <location>
        <begin position="481"/>
        <end position="578"/>
    </location>
</feature>
<feature type="compositionally biased region" description="Basic and acidic residues" evidence="3">
    <location>
        <begin position="494"/>
        <end position="505"/>
    </location>
</feature>
<gene>
    <name type="primary">eif2a</name>
    <name type="ORF">zgc:110460</name>
</gene>
<keyword id="KW-0175">Coiled coil</keyword>
<keyword id="KW-0396">Initiation factor</keyword>
<keyword id="KW-0648">Protein biosynthesis</keyword>
<keyword id="KW-1185">Reference proteome</keyword>
<keyword id="KW-0677">Repeat</keyword>
<keyword id="KW-0810">Translation regulation</keyword>
<keyword id="KW-0853">WD repeat</keyword>
<organism>
    <name type="scientific">Danio rerio</name>
    <name type="common">Zebrafish</name>
    <name type="synonym">Brachydanio rerio</name>
    <dbReference type="NCBI Taxonomy" id="7955"/>
    <lineage>
        <taxon>Eukaryota</taxon>
        <taxon>Metazoa</taxon>
        <taxon>Chordata</taxon>
        <taxon>Craniata</taxon>
        <taxon>Vertebrata</taxon>
        <taxon>Euteleostomi</taxon>
        <taxon>Actinopterygii</taxon>
        <taxon>Neopterygii</taxon>
        <taxon>Teleostei</taxon>
        <taxon>Ostariophysi</taxon>
        <taxon>Cypriniformes</taxon>
        <taxon>Danionidae</taxon>
        <taxon>Danioninae</taxon>
        <taxon>Danio</taxon>
    </lineage>
</organism>